<accession>Q9ZJP7</accession>
<keyword id="KW-0238">DNA-binding</keyword>
<keyword id="KW-0479">Metal-binding</keyword>
<keyword id="KW-0533">Nickel</keyword>
<keyword id="KW-0804">Transcription</keyword>
<keyword id="KW-0805">Transcription regulation</keyword>
<sequence>MDTPNKDDSIIRFSVSLQQNLLDELDNRIIKNGYSSRSELVRDMIREKLVEDNWVEDNPNDGSKIAVLVVIYDHHQRELNQRMIDIQHASGTHVLCTTHIHMDEHNCLETIILQGNSLEIQRLQLEIGGLRGVKFAKLTKASSFEYNE</sequence>
<feature type="chain" id="PRO_0000139292" description="Putative nickel-responsive regulator">
    <location>
        <begin position="1"/>
        <end position="148"/>
    </location>
</feature>
<feature type="binding site" evidence="1">
    <location>
        <position position="88"/>
    </location>
    <ligand>
        <name>Ni(2+)</name>
        <dbReference type="ChEBI" id="CHEBI:49786"/>
    </ligand>
</feature>
<feature type="binding site" evidence="1">
    <location>
        <position position="99"/>
    </location>
    <ligand>
        <name>Ni(2+)</name>
        <dbReference type="ChEBI" id="CHEBI:49786"/>
    </ligand>
</feature>
<feature type="binding site" evidence="1">
    <location>
        <position position="101"/>
    </location>
    <ligand>
        <name>Ni(2+)</name>
        <dbReference type="ChEBI" id="CHEBI:49786"/>
    </ligand>
</feature>
<feature type="binding site" evidence="1">
    <location>
        <position position="107"/>
    </location>
    <ligand>
        <name>Ni(2+)</name>
        <dbReference type="ChEBI" id="CHEBI:49786"/>
    </ligand>
</feature>
<name>NIKR_HELPJ</name>
<comment type="function">
    <text evidence="1">Transcriptional regulator.</text>
</comment>
<comment type="cofactor">
    <cofactor evidence="1">
        <name>Ni(2+)</name>
        <dbReference type="ChEBI" id="CHEBI:49786"/>
    </cofactor>
    <text evidence="1">Binds 1 nickel ion per subunit.</text>
</comment>
<comment type="subunit">
    <text evidence="1">Homotetramer.</text>
</comment>
<comment type="similarity">
    <text evidence="1">Belongs to the transcriptional regulatory CopG/NikR family.</text>
</comment>
<evidence type="ECO:0000255" key="1">
    <source>
        <dbReference type="HAMAP-Rule" id="MF_00476"/>
    </source>
</evidence>
<organism>
    <name type="scientific">Helicobacter pylori (strain J99 / ATCC 700824)</name>
    <name type="common">Campylobacter pylori J99</name>
    <dbReference type="NCBI Taxonomy" id="85963"/>
    <lineage>
        <taxon>Bacteria</taxon>
        <taxon>Pseudomonadati</taxon>
        <taxon>Campylobacterota</taxon>
        <taxon>Epsilonproteobacteria</taxon>
        <taxon>Campylobacterales</taxon>
        <taxon>Helicobacteraceae</taxon>
        <taxon>Helicobacter</taxon>
    </lineage>
</organism>
<proteinExistence type="inferred from homology"/>
<gene>
    <name type="ordered locus">jhp_1257</name>
</gene>
<dbReference type="EMBL" id="AE001439">
    <property type="protein sequence ID" value="AAD06843.1"/>
    <property type="molecule type" value="Genomic_DNA"/>
</dbReference>
<dbReference type="PIR" id="C71829">
    <property type="entry name" value="C71829"/>
</dbReference>
<dbReference type="RefSeq" id="WP_000380814.1">
    <property type="nucleotide sequence ID" value="NC_000921.1"/>
</dbReference>
<dbReference type="BMRB" id="Q9ZJP7"/>
<dbReference type="SMR" id="Q9ZJP7"/>
<dbReference type="KEGG" id="hpj:jhp_1257"/>
<dbReference type="PATRIC" id="fig|85963.30.peg.1314"/>
<dbReference type="eggNOG" id="COG0864">
    <property type="taxonomic scope" value="Bacteria"/>
</dbReference>
<dbReference type="Proteomes" id="UP000000804">
    <property type="component" value="Chromosome"/>
</dbReference>
<dbReference type="GO" id="GO:0003677">
    <property type="term" value="F:DNA binding"/>
    <property type="evidence" value="ECO:0007669"/>
    <property type="project" value="UniProtKB-KW"/>
</dbReference>
<dbReference type="GO" id="GO:0003700">
    <property type="term" value="F:DNA-binding transcription factor activity"/>
    <property type="evidence" value="ECO:0007669"/>
    <property type="project" value="UniProtKB-UniRule"/>
</dbReference>
<dbReference type="GO" id="GO:0016151">
    <property type="term" value="F:nickel cation binding"/>
    <property type="evidence" value="ECO:0007669"/>
    <property type="project" value="UniProtKB-UniRule"/>
</dbReference>
<dbReference type="GO" id="GO:0010045">
    <property type="term" value="P:response to nickel cation"/>
    <property type="evidence" value="ECO:0007669"/>
    <property type="project" value="InterPro"/>
</dbReference>
<dbReference type="CDD" id="cd22231">
    <property type="entry name" value="RHH_NikR_HicB-like"/>
    <property type="match status" value="1"/>
</dbReference>
<dbReference type="FunFam" id="1.10.1220.10:FF:000010">
    <property type="entry name" value="Putative nickel-responsive regulator"/>
    <property type="match status" value="1"/>
</dbReference>
<dbReference type="FunFam" id="3.30.70.1150:FF:000004">
    <property type="entry name" value="Putative nickel-responsive regulator"/>
    <property type="match status" value="1"/>
</dbReference>
<dbReference type="Gene3D" id="3.30.70.1150">
    <property type="entry name" value="ACT-like. Chain A, domain 2"/>
    <property type="match status" value="1"/>
</dbReference>
<dbReference type="Gene3D" id="1.10.1220.10">
    <property type="entry name" value="Met repressor-like"/>
    <property type="match status" value="1"/>
</dbReference>
<dbReference type="HAMAP" id="MF_00476">
    <property type="entry name" value="NikR"/>
    <property type="match status" value="1"/>
</dbReference>
<dbReference type="InterPro" id="IPR027271">
    <property type="entry name" value="Acetolactate_synth/TF_NikR_C"/>
</dbReference>
<dbReference type="InterPro" id="IPR045865">
    <property type="entry name" value="ACT-like_dom_sf"/>
</dbReference>
<dbReference type="InterPro" id="IPR013321">
    <property type="entry name" value="Arc_rbn_hlx_hlx"/>
</dbReference>
<dbReference type="InterPro" id="IPR002145">
    <property type="entry name" value="CopG"/>
</dbReference>
<dbReference type="InterPro" id="IPR050192">
    <property type="entry name" value="CopG/NikR_regulator"/>
</dbReference>
<dbReference type="InterPro" id="IPR022988">
    <property type="entry name" value="Ni_resp_reg_NikR"/>
</dbReference>
<dbReference type="InterPro" id="IPR010985">
    <property type="entry name" value="Ribbon_hlx_hlx"/>
</dbReference>
<dbReference type="InterPro" id="IPR014864">
    <property type="entry name" value="TF_NikR_Ni-bd_C"/>
</dbReference>
<dbReference type="NCBIfam" id="NF001884">
    <property type="entry name" value="PRK00630.1"/>
    <property type="match status" value="1"/>
</dbReference>
<dbReference type="NCBIfam" id="NF002169">
    <property type="entry name" value="PRK01002.1"/>
    <property type="match status" value="1"/>
</dbReference>
<dbReference type="NCBIfam" id="NF002815">
    <property type="entry name" value="PRK02967.1"/>
    <property type="match status" value="1"/>
</dbReference>
<dbReference type="NCBIfam" id="NF003381">
    <property type="entry name" value="PRK04460.1"/>
    <property type="match status" value="1"/>
</dbReference>
<dbReference type="PANTHER" id="PTHR34719">
    <property type="entry name" value="NICKEL-RESPONSIVE REGULATOR"/>
    <property type="match status" value="1"/>
</dbReference>
<dbReference type="PANTHER" id="PTHR34719:SF2">
    <property type="entry name" value="NICKEL-RESPONSIVE REGULATOR"/>
    <property type="match status" value="1"/>
</dbReference>
<dbReference type="Pfam" id="PF08753">
    <property type="entry name" value="NikR_C"/>
    <property type="match status" value="1"/>
</dbReference>
<dbReference type="Pfam" id="PF01402">
    <property type="entry name" value="RHH_1"/>
    <property type="match status" value="1"/>
</dbReference>
<dbReference type="SUPFAM" id="SSF55021">
    <property type="entry name" value="ACT-like"/>
    <property type="match status" value="1"/>
</dbReference>
<dbReference type="SUPFAM" id="SSF47598">
    <property type="entry name" value="Ribbon-helix-helix"/>
    <property type="match status" value="1"/>
</dbReference>
<reference key="1">
    <citation type="journal article" date="1999" name="Nature">
        <title>Genomic sequence comparison of two unrelated isolates of the human gastric pathogen Helicobacter pylori.</title>
        <authorList>
            <person name="Alm R.A."/>
            <person name="Ling L.-S.L."/>
            <person name="Moir D.T."/>
            <person name="King B.L."/>
            <person name="Brown E.D."/>
            <person name="Doig P.C."/>
            <person name="Smith D.R."/>
            <person name="Noonan B."/>
            <person name="Guild B.C."/>
            <person name="deJonge B.L."/>
            <person name="Carmel G."/>
            <person name="Tummino P.J."/>
            <person name="Caruso A."/>
            <person name="Uria-Nickelsen M."/>
            <person name="Mills D.M."/>
            <person name="Ives C."/>
            <person name="Gibson R."/>
            <person name="Merberg D."/>
            <person name="Mills S.D."/>
            <person name="Jiang Q."/>
            <person name="Taylor D.E."/>
            <person name="Vovis G.F."/>
            <person name="Trust T.J."/>
        </authorList>
    </citation>
    <scope>NUCLEOTIDE SEQUENCE [LARGE SCALE GENOMIC DNA]</scope>
    <source>
        <strain>J99 / ATCC 700824</strain>
    </source>
</reference>
<protein>
    <recommendedName>
        <fullName evidence="1">Putative nickel-responsive regulator</fullName>
    </recommendedName>
</protein>